<protein>
    <recommendedName>
        <fullName>SPbeta prophage-derived protein BhlA</fullName>
    </recommendedName>
</protein>
<accession>O31983</accession>
<keyword id="KW-1185">Reference proteome</keyword>
<dbReference type="EMBL" id="AF021803">
    <property type="protein sequence ID" value="AAC38301.1"/>
    <property type="molecule type" value="Genomic_DNA"/>
</dbReference>
<dbReference type="EMBL" id="AL009126">
    <property type="protein sequence ID" value="CAB14060.1"/>
    <property type="molecule type" value="Genomic_DNA"/>
</dbReference>
<dbReference type="RefSeq" id="NP_390025.1">
    <property type="nucleotide sequence ID" value="NC_000964.3"/>
</dbReference>
<dbReference type="RefSeq" id="WP_003246119.1">
    <property type="nucleotide sequence ID" value="NZ_OZ025638.1"/>
</dbReference>
<dbReference type="SMR" id="O31983"/>
<dbReference type="FunCoup" id="O31983">
    <property type="interactions" value="18"/>
</dbReference>
<dbReference type="STRING" id="224308.BSU21420"/>
<dbReference type="PaxDb" id="224308-BSU21420"/>
<dbReference type="EnsemblBacteria" id="CAB14060">
    <property type="protein sequence ID" value="CAB14060"/>
    <property type="gene ID" value="BSU_21420"/>
</dbReference>
<dbReference type="GeneID" id="939132"/>
<dbReference type="KEGG" id="bsu:BSU21420"/>
<dbReference type="PATRIC" id="fig|224308.179.peg.2339"/>
<dbReference type="eggNOG" id="ENOG502ZUAI">
    <property type="taxonomic scope" value="Bacteria"/>
</dbReference>
<dbReference type="InParanoid" id="O31983"/>
<dbReference type="OrthoDB" id="2361545at2"/>
<dbReference type="BioCyc" id="BSUB:BSU21420-MONOMER"/>
<dbReference type="Proteomes" id="UP000001570">
    <property type="component" value="Chromosome"/>
</dbReference>
<dbReference type="InterPro" id="IPR024405">
    <property type="entry name" value="Phage_BhlA/UviB"/>
</dbReference>
<dbReference type="Pfam" id="PF10960">
    <property type="entry name" value="Holin_BhlA"/>
    <property type="match status" value="1"/>
</dbReference>
<proteinExistence type="predicted"/>
<reference key="1">
    <citation type="journal article" date="1998" name="Microbiology">
        <title>The N-acetylmuramoyl-L-alanine amidase encoded by the Bacillus subtilis 168 prophage SP beta.</title>
        <authorList>
            <person name="Regamey A."/>
            <person name="Karamata D."/>
        </authorList>
    </citation>
    <scope>NUCLEOTIDE SEQUENCE [GENOMIC DNA]</scope>
    <scope>PUTATIVE FUNCTION</scope>
    <source>
        <strain>168</strain>
    </source>
</reference>
<reference key="2">
    <citation type="journal article" date="1997" name="Nature">
        <title>The complete genome sequence of the Gram-positive bacterium Bacillus subtilis.</title>
        <authorList>
            <person name="Kunst F."/>
            <person name="Ogasawara N."/>
            <person name="Moszer I."/>
            <person name="Albertini A.M."/>
            <person name="Alloni G."/>
            <person name="Azevedo V."/>
            <person name="Bertero M.G."/>
            <person name="Bessieres P."/>
            <person name="Bolotin A."/>
            <person name="Borchert S."/>
            <person name="Borriss R."/>
            <person name="Boursier L."/>
            <person name="Brans A."/>
            <person name="Braun M."/>
            <person name="Brignell S.C."/>
            <person name="Bron S."/>
            <person name="Brouillet S."/>
            <person name="Bruschi C.V."/>
            <person name="Caldwell B."/>
            <person name="Capuano V."/>
            <person name="Carter N.M."/>
            <person name="Choi S.-K."/>
            <person name="Codani J.-J."/>
            <person name="Connerton I.F."/>
            <person name="Cummings N.J."/>
            <person name="Daniel R.A."/>
            <person name="Denizot F."/>
            <person name="Devine K.M."/>
            <person name="Duesterhoeft A."/>
            <person name="Ehrlich S.D."/>
            <person name="Emmerson P.T."/>
            <person name="Entian K.-D."/>
            <person name="Errington J."/>
            <person name="Fabret C."/>
            <person name="Ferrari E."/>
            <person name="Foulger D."/>
            <person name="Fritz C."/>
            <person name="Fujita M."/>
            <person name="Fujita Y."/>
            <person name="Fuma S."/>
            <person name="Galizzi A."/>
            <person name="Galleron N."/>
            <person name="Ghim S.-Y."/>
            <person name="Glaser P."/>
            <person name="Goffeau A."/>
            <person name="Golightly E.J."/>
            <person name="Grandi G."/>
            <person name="Guiseppi G."/>
            <person name="Guy B.J."/>
            <person name="Haga K."/>
            <person name="Haiech J."/>
            <person name="Harwood C.R."/>
            <person name="Henaut A."/>
            <person name="Hilbert H."/>
            <person name="Holsappel S."/>
            <person name="Hosono S."/>
            <person name="Hullo M.-F."/>
            <person name="Itaya M."/>
            <person name="Jones L.-M."/>
            <person name="Joris B."/>
            <person name="Karamata D."/>
            <person name="Kasahara Y."/>
            <person name="Klaerr-Blanchard M."/>
            <person name="Klein C."/>
            <person name="Kobayashi Y."/>
            <person name="Koetter P."/>
            <person name="Koningstein G."/>
            <person name="Krogh S."/>
            <person name="Kumano M."/>
            <person name="Kurita K."/>
            <person name="Lapidus A."/>
            <person name="Lardinois S."/>
            <person name="Lauber J."/>
            <person name="Lazarevic V."/>
            <person name="Lee S.-M."/>
            <person name="Levine A."/>
            <person name="Liu H."/>
            <person name="Masuda S."/>
            <person name="Mauel C."/>
            <person name="Medigue C."/>
            <person name="Medina N."/>
            <person name="Mellado R.P."/>
            <person name="Mizuno M."/>
            <person name="Moestl D."/>
            <person name="Nakai S."/>
            <person name="Noback M."/>
            <person name="Noone D."/>
            <person name="O'Reilly M."/>
            <person name="Ogawa K."/>
            <person name="Ogiwara A."/>
            <person name="Oudega B."/>
            <person name="Park S.-H."/>
            <person name="Parro V."/>
            <person name="Pohl T.M."/>
            <person name="Portetelle D."/>
            <person name="Porwollik S."/>
            <person name="Prescott A.M."/>
            <person name="Presecan E."/>
            <person name="Pujic P."/>
            <person name="Purnelle B."/>
            <person name="Rapoport G."/>
            <person name="Rey M."/>
            <person name="Reynolds S."/>
            <person name="Rieger M."/>
            <person name="Rivolta C."/>
            <person name="Rocha E."/>
            <person name="Roche B."/>
            <person name="Rose M."/>
            <person name="Sadaie Y."/>
            <person name="Sato T."/>
            <person name="Scanlan E."/>
            <person name="Schleich S."/>
            <person name="Schroeter R."/>
            <person name="Scoffone F."/>
            <person name="Sekiguchi J."/>
            <person name="Sekowska A."/>
            <person name="Seror S.J."/>
            <person name="Serror P."/>
            <person name="Shin B.-S."/>
            <person name="Soldo B."/>
            <person name="Sorokin A."/>
            <person name="Tacconi E."/>
            <person name="Takagi T."/>
            <person name="Takahashi H."/>
            <person name="Takemaru K."/>
            <person name="Takeuchi M."/>
            <person name="Tamakoshi A."/>
            <person name="Tanaka T."/>
            <person name="Terpstra P."/>
            <person name="Tognoni A."/>
            <person name="Tosato V."/>
            <person name="Uchiyama S."/>
            <person name="Vandenbol M."/>
            <person name="Vannier F."/>
            <person name="Vassarotti A."/>
            <person name="Viari A."/>
            <person name="Wambutt R."/>
            <person name="Wedler E."/>
            <person name="Wedler H."/>
            <person name="Weitzenegger T."/>
            <person name="Winters P."/>
            <person name="Wipat A."/>
            <person name="Yamamoto H."/>
            <person name="Yamane K."/>
            <person name="Yasumoto K."/>
            <person name="Yata K."/>
            <person name="Yoshida K."/>
            <person name="Yoshikawa H.-F."/>
            <person name="Zumstein E."/>
            <person name="Yoshikawa H."/>
            <person name="Danchin A."/>
        </authorList>
    </citation>
    <scope>NUCLEOTIDE SEQUENCE [LARGE SCALE GENOMIC DNA]</scope>
    <source>
        <strain>168</strain>
    </source>
</reference>
<comment type="function">
    <text>May be involved in the secretion of the autolysin BlyA.</text>
</comment>
<sequence length="70" mass="8380">MEMDITQYLSTQGPFAVLFCWLLFYVMKTSKERESKLYNQIDSQNEVLGKFSEKYDVVIEKLDKIEQNFK</sequence>
<name>BHLA_BACSU</name>
<organism>
    <name type="scientific">Bacillus subtilis (strain 168)</name>
    <dbReference type="NCBI Taxonomy" id="224308"/>
    <lineage>
        <taxon>Bacteria</taxon>
        <taxon>Bacillati</taxon>
        <taxon>Bacillota</taxon>
        <taxon>Bacilli</taxon>
        <taxon>Bacillales</taxon>
        <taxon>Bacillaceae</taxon>
        <taxon>Bacillus</taxon>
    </lineage>
</organism>
<feature type="chain" id="PRO_0000064921" description="SPbeta prophage-derived protein BhlA">
    <location>
        <begin position="1"/>
        <end position="70"/>
    </location>
</feature>
<gene>
    <name type="primary">bhlA</name>
    <name type="synonym">yomB</name>
    <name type="ordered locus">BSU21420</name>
</gene>